<feature type="chain" id="PRO_0000290428" description="Ethylene-responsive transcription factor ERF117">
    <location>
        <begin position="1"/>
        <end position="329"/>
    </location>
</feature>
<feature type="DNA-binding region" description="AP2/ERF" evidence="2">
    <location>
        <begin position="86"/>
        <end position="143"/>
    </location>
</feature>
<feature type="region of interest" description="Disordered" evidence="3">
    <location>
        <begin position="25"/>
        <end position="51"/>
    </location>
</feature>
<feature type="region of interest" description="Disordered" evidence="3">
    <location>
        <begin position="71"/>
        <end position="90"/>
    </location>
</feature>
<feature type="compositionally biased region" description="Polar residues" evidence="3">
    <location>
        <begin position="71"/>
        <end position="86"/>
    </location>
</feature>
<sequence length="329" mass="37478">MISFREENIDLNLIKTISVICNDPDATDSSSDDESISGNNPRRQIKPKPPKRYVSKICVPTLIKRYENVSNSTGNKAAGNRKTSSGFKGVRRRPWGKFAAEIRNPFEKKRKWLGTFPTEEEAAEAYQKSKREFDERLGLVKQEKDLVDLTKPCGVRKPEEKEVTEKSNCKKVNKRIVTDQKPFGCGYNADHEEEGVISKMLEDPLMTSSIADIFGDSAVEANDIWVDYNSVEFISIVDDFKFDFVENDRVGKEKTFGFKIGDHTKVNQHAKIVSTNGDLFVDDLLDFDPLIDDFKLEDFPMDDLGLLGDPEDDDFSWFNGTTDWIDKFL</sequence>
<keyword id="KW-0010">Activator</keyword>
<keyword id="KW-0238">DNA-binding</keyword>
<keyword id="KW-0936">Ethylene signaling pathway</keyword>
<keyword id="KW-0539">Nucleus</keyword>
<keyword id="KW-1185">Reference proteome</keyword>
<keyword id="KW-0804">Transcription</keyword>
<keyword id="KW-0805">Transcription regulation</keyword>
<protein>
    <recommendedName>
        <fullName>Ethylene-responsive transcription factor ERF117</fullName>
    </recommendedName>
</protein>
<reference key="1">
    <citation type="submission" date="2004-02" db="EMBL/GenBank/DDBJ databases">
        <title>Molecular cloning, expression, phylogenetic and functional characterization of the Arabidopsis AP2/EREBP transcription factor family.</title>
        <authorList>
            <person name="Pan Y."/>
            <person name="Gong W."/>
            <person name="Liu D."/>
            <person name="Fu Q."/>
            <person name="Mei W.-Q."/>
            <person name="Song W.-Q."/>
            <person name="Ma L.-G."/>
            <person name="Luo J.-C."/>
            <person name="Deng X.-W."/>
            <person name="Zhu Y.-X."/>
        </authorList>
    </citation>
    <scope>NUCLEOTIDE SEQUENCE [MRNA]</scope>
</reference>
<reference key="2">
    <citation type="journal article" date="2000" name="Nature">
        <title>Sequence and analysis of chromosome 1 of the plant Arabidopsis thaliana.</title>
        <authorList>
            <person name="Theologis A."/>
            <person name="Ecker J.R."/>
            <person name="Palm C.J."/>
            <person name="Federspiel N.A."/>
            <person name="Kaul S."/>
            <person name="White O."/>
            <person name="Alonso J."/>
            <person name="Altafi H."/>
            <person name="Araujo R."/>
            <person name="Bowman C.L."/>
            <person name="Brooks S.Y."/>
            <person name="Buehler E."/>
            <person name="Chan A."/>
            <person name="Chao Q."/>
            <person name="Chen H."/>
            <person name="Cheuk R.F."/>
            <person name="Chin C.W."/>
            <person name="Chung M.K."/>
            <person name="Conn L."/>
            <person name="Conway A.B."/>
            <person name="Conway A.R."/>
            <person name="Creasy T.H."/>
            <person name="Dewar K."/>
            <person name="Dunn P."/>
            <person name="Etgu P."/>
            <person name="Feldblyum T.V."/>
            <person name="Feng J.-D."/>
            <person name="Fong B."/>
            <person name="Fujii C.Y."/>
            <person name="Gill J.E."/>
            <person name="Goldsmith A.D."/>
            <person name="Haas B."/>
            <person name="Hansen N.F."/>
            <person name="Hughes B."/>
            <person name="Huizar L."/>
            <person name="Hunter J.L."/>
            <person name="Jenkins J."/>
            <person name="Johnson-Hopson C."/>
            <person name="Khan S."/>
            <person name="Khaykin E."/>
            <person name="Kim C.J."/>
            <person name="Koo H.L."/>
            <person name="Kremenetskaia I."/>
            <person name="Kurtz D.B."/>
            <person name="Kwan A."/>
            <person name="Lam B."/>
            <person name="Langin-Hooper S."/>
            <person name="Lee A."/>
            <person name="Lee J.M."/>
            <person name="Lenz C.A."/>
            <person name="Li J.H."/>
            <person name="Li Y.-P."/>
            <person name="Lin X."/>
            <person name="Liu S.X."/>
            <person name="Liu Z.A."/>
            <person name="Luros J.S."/>
            <person name="Maiti R."/>
            <person name="Marziali A."/>
            <person name="Militscher J."/>
            <person name="Miranda M."/>
            <person name="Nguyen M."/>
            <person name="Nierman W.C."/>
            <person name="Osborne B.I."/>
            <person name="Pai G."/>
            <person name="Peterson J."/>
            <person name="Pham P.K."/>
            <person name="Rizzo M."/>
            <person name="Rooney T."/>
            <person name="Rowley D."/>
            <person name="Sakano H."/>
            <person name="Salzberg S.L."/>
            <person name="Schwartz J.R."/>
            <person name="Shinn P."/>
            <person name="Southwick A.M."/>
            <person name="Sun H."/>
            <person name="Tallon L.J."/>
            <person name="Tambunga G."/>
            <person name="Toriumi M.J."/>
            <person name="Town C.D."/>
            <person name="Utterback T."/>
            <person name="Van Aken S."/>
            <person name="Vaysberg M."/>
            <person name="Vysotskaia V.S."/>
            <person name="Walker M."/>
            <person name="Wu D."/>
            <person name="Yu G."/>
            <person name="Fraser C.M."/>
            <person name="Venter J.C."/>
            <person name="Davis R.W."/>
        </authorList>
    </citation>
    <scope>NUCLEOTIDE SEQUENCE [LARGE SCALE GENOMIC DNA]</scope>
    <source>
        <strain>cv. Columbia</strain>
    </source>
</reference>
<reference key="3">
    <citation type="journal article" date="2017" name="Plant J.">
        <title>Araport11: a complete reannotation of the Arabidopsis thaliana reference genome.</title>
        <authorList>
            <person name="Cheng C.Y."/>
            <person name="Krishnakumar V."/>
            <person name="Chan A.P."/>
            <person name="Thibaud-Nissen F."/>
            <person name="Schobel S."/>
            <person name="Town C.D."/>
        </authorList>
    </citation>
    <scope>GENOME REANNOTATION</scope>
    <source>
        <strain>cv. Columbia</strain>
    </source>
</reference>
<reference key="4">
    <citation type="journal article" date="2006" name="Plant Physiol.">
        <title>Genome-wide analysis of the ERF gene family in Arabidopsis and rice.</title>
        <authorList>
            <person name="Nakano T."/>
            <person name="Suzuki K."/>
            <person name="Fujimura T."/>
            <person name="Shinshi H."/>
        </authorList>
    </citation>
    <scope>GENE FAMILY</scope>
    <scope>NOMENCLATURE</scope>
</reference>
<proteinExistence type="evidence at transcript level"/>
<evidence type="ECO:0000250" key="1"/>
<evidence type="ECO:0000255" key="2">
    <source>
        <dbReference type="PROSITE-ProRule" id="PRU00366"/>
    </source>
</evidence>
<evidence type="ECO:0000256" key="3">
    <source>
        <dbReference type="SAM" id="MobiDB-lite"/>
    </source>
</evidence>
<evidence type="ECO:0000305" key="4"/>
<accession>Q9M9B2</accession>
<gene>
    <name type="primary">ERF117</name>
    <name type="ordered locus">At1g49120</name>
    <name type="ORF">F27J15.11</name>
</gene>
<comment type="function">
    <text evidence="1">Probably acts as a transcriptional activator. Binds to the GCC-box pathogenesis-related promoter element. May be involved in the regulation of gene expression by stress factors and by components of stress signal transduction pathways (By similarity).</text>
</comment>
<comment type="subcellular location">
    <subcellularLocation>
        <location evidence="4">Nucleus</location>
    </subcellularLocation>
</comment>
<comment type="similarity">
    <text evidence="4">Belongs to the AP2/ERF transcription factor family. ERF subfamily.</text>
</comment>
<dbReference type="EMBL" id="AY560840">
    <property type="protein sequence ID" value="AAT44907.1"/>
    <property type="molecule type" value="mRNA"/>
</dbReference>
<dbReference type="EMBL" id="AC016041">
    <property type="protein sequence ID" value="AAF69719.1"/>
    <property type="molecule type" value="Genomic_DNA"/>
</dbReference>
<dbReference type="EMBL" id="CP002684">
    <property type="protein sequence ID" value="AEE32392.1"/>
    <property type="molecule type" value="Genomic_DNA"/>
</dbReference>
<dbReference type="SMR" id="Q9M9B2"/>
<dbReference type="BioGRID" id="26560">
    <property type="interactions" value="4"/>
</dbReference>
<dbReference type="FunCoup" id="Q9M9B2">
    <property type="interactions" value="1"/>
</dbReference>
<dbReference type="IntAct" id="Q9M9B2">
    <property type="interactions" value="4"/>
</dbReference>
<dbReference type="iPTMnet" id="Q9M9B2"/>
<dbReference type="PaxDb" id="3702-AT1G49120.1"/>
<dbReference type="EnsemblPlants" id="AT1G49120.1">
    <property type="protein sequence ID" value="AT1G49120.1"/>
    <property type="gene ID" value="AT1G49120"/>
</dbReference>
<dbReference type="GeneID" id="841335"/>
<dbReference type="Gramene" id="AT1G49120.1">
    <property type="protein sequence ID" value="AT1G49120.1"/>
    <property type="gene ID" value="AT1G49120"/>
</dbReference>
<dbReference type="KEGG" id="ath:AT1G49120"/>
<dbReference type="Araport" id="AT1G49120"/>
<dbReference type="TAIR" id="AT1G49120">
    <property type="gene designation" value="CRF9"/>
</dbReference>
<dbReference type="eggNOG" id="ENOG502S2BD">
    <property type="taxonomic scope" value="Eukaryota"/>
</dbReference>
<dbReference type="HOGENOM" id="CLU_062946_0_0_1"/>
<dbReference type="InParanoid" id="Q9M9B2"/>
<dbReference type="OMA" id="YVSKICV"/>
<dbReference type="PhylomeDB" id="Q9M9B2"/>
<dbReference type="PRO" id="PR:Q9M9B2"/>
<dbReference type="Proteomes" id="UP000006548">
    <property type="component" value="Chromosome 1"/>
</dbReference>
<dbReference type="ExpressionAtlas" id="Q9M9B2">
    <property type="expression patterns" value="baseline"/>
</dbReference>
<dbReference type="GO" id="GO:0005634">
    <property type="term" value="C:nucleus"/>
    <property type="evidence" value="ECO:0007669"/>
    <property type="project" value="UniProtKB-SubCell"/>
</dbReference>
<dbReference type="GO" id="GO:0003677">
    <property type="term" value="F:DNA binding"/>
    <property type="evidence" value="ECO:0007669"/>
    <property type="project" value="UniProtKB-KW"/>
</dbReference>
<dbReference type="GO" id="GO:0003700">
    <property type="term" value="F:DNA-binding transcription factor activity"/>
    <property type="evidence" value="ECO:0000250"/>
    <property type="project" value="TAIR"/>
</dbReference>
<dbReference type="GO" id="GO:0009873">
    <property type="term" value="P:ethylene-activated signaling pathway"/>
    <property type="evidence" value="ECO:0007669"/>
    <property type="project" value="UniProtKB-KW"/>
</dbReference>
<dbReference type="CDD" id="cd00018">
    <property type="entry name" value="AP2"/>
    <property type="match status" value="1"/>
</dbReference>
<dbReference type="Gene3D" id="3.30.730.10">
    <property type="entry name" value="AP2/ERF domain"/>
    <property type="match status" value="1"/>
</dbReference>
<dbReference type="InterPro" id="IPR001471">
    <property type="entry name" value="AP2/ERF_dom"/>
</dbReference>
<dbReference type="InterPro" id="IPR036955">
    <property type="entry name" value="AP2/ERF_dom_sf"/>
</dbReference>
<dbReference type="InterPro" id="IPR050913">
    <property type="entry name" value="AP2/ERF_ERF_subfamily"/>
</dbReference>
<dbReference type="InterPro" id="IPR016177">
    <property type="entry name" value="DNA-bd_dom_sf"/>
</dbReference>
<dbReference type="PANTHER" id="PTHR31194:SF187">
    <property type="entry name" value="ETHYLENE-RESPONSIVE TRANSCRIPTION FACTOR ERF118-LIKE"/>
    <property type="match status" value="1"/>
</dbReference>
<dbReference type="PANTHER" id="PTHR31194">
    <property type="entry name" value="SHN SHINE , DNA BINDING / TRANSCRIPTION FACTOR"/>
    <property type="match status" value="1"/>
</dbReference>
<dbReference type="Pfam" id="PF00847">
    <property type="entry name" value="AP2"/>
    <property type="match status" value="1"/>
</dbReference>
<dbReference type="PRINTS" id="PR00367">
    <property type="entry name" value="ETHRSPELEMNT"/>
</dbReference>
<dbReference type="SMART" id="SM00380">
    <property type="entry name" value="AP2"/>
    <property type="match status" value="1"/>
</dbReference>
<dbReference type="SUPFAM" id="SSF54171">
    <property type="entry name" value="DNA-binding domain"/>
    <property type="match status" value="1"/>
</dbReference>
<dbReference type="PROSITE" id="PS51032">
    <property type="entry name" value="AP2_ERF"/>
    <property type="match status" value="1"/>
</dbReference>
<name>EF117_ARATH</name>
<organism>
    <name type="scientific">Arabidopsis thaliana</name>
    <name type="common">Mouse-ear cress</name>
    <dbReference type="NCBI Taxonomy" id="3702"/>
    <lineage>
        <taxon>Eukaryota</taxon>
        <taxon>Viridiplantae</taxon>
        <taxon>Streptophyta</taxon>
        <taxon>Embryophyta</taxon>
        <taxon>Tracheophyta</taxon>
        <taxon>Spermatophyta</taxon>
        <taxon>Magnoliopsida</taxon>
        <taxon>eudicotyledons</taxon>
        <taxon>Gunneridae</taxon>
        <taxon>Pentapetalae</taxon>
        <taxon>rosids</taxon>
        <taxon>malvids</taxon>
        <taxon>Brassicales</taxon>
        <taxon>Brassicaceae</taxon>
        <taxon>Camelineae</taxon>
        <taxon>Arabidopsis</taxon>
    </lineage>
</organism>